<gene>
    <name evidence="4" type="primary">SERTM2</name>
</gene>
<accession>A0A1B0GWG4</accession>
<proteinExistence type="inferred from homology"/>
<feature type="chain" id="PRO_0000443423" description="Serine-rich and transmembrane domain-containing 2">
    <location>
        <begin position="1"/>
        <end position="90"/>
    </location>
</feature>
<feature type="transmembrane region" description="Helical" evidence="1">
    <location>
        <begin position="38"/>
        <end position="58"/>
    </location>
</feature>
<feature type="region of interest" description="Disordered" evidence="2">
    <location>
        <begin position="69"/>
        <end position="90"/>
    </location>
</feature>
<feature type="glycosylation site" description="N-linked (GlcNAc...) asparagine" evidence="1">
    <location>
        <position position="11"/>
    </location>
</feature>
<feature type="sequence conflict" description="In Ref. 1; BX537697." evidence="3" ref="1">
    <original>G</original>
    <variation>R</variation>
    <location>
        <position position="14"/>
    </location>
</feature>
<evidence type="ECO:0000255" key="1"/>
<evidence type="ECO:0000256" key="2">
    <source>
        <dbReference type="SAM" id="MobiDB-lite"/>
    </source>
</evidence>
<evidence type="ECO:0000305" key="3"/>
<evidence type="ECO:0000312" key="4">
    <source>
        <dbReference type="HGNC" id="HGNC:48576"/>
    </source>
</evidence>
<comment type="subcellular location">
    <subcellularLocation>
        <location evidence="1">Membrane</location>
        <topology evidence="1">Single-pass membrane protein</topology>
    </subcellularLocation>
</comment>
<keyword id="KW-0325">Glycoprotein</keyword>
<keyword id="KW-0472">Membrane</keyword>
<keyword id="KW-1185">Reference proteome</keyword>
<keyword id="KW-0812">Transmembrane</keyword>
<keyword id="KW-1133">Transmembrane helix</keyword>
<name>SRTM2_HUMAN</name>
<sequence length="90" mass="10219">MMEAHFKYHGNLTGRAHFPTLATEVDTSSDKYSNLYMYVGLFLSLLAILLILLFTMLLRLKHVISPINSDSTESVPQFTDVEMQSRIPTP</sequence>
<protein>
    <recommendedName>
        <fullName evidence="3">Serine-rich and transmembrane domain-containing 2</fullName>
    </recommendedName>
</protein>
<organism>
    <name type="scientific">Homo sapiens</name>
    <name type="common">Human</name>
    <dbReference type="NCBI Taxonomy" id="9606"/>
    <lineage>
        <taxon>Eukaryota</taxon>
        <taxon>Metazoa</taxon>
        <taxon>Chordata</taxon>
        <taxon>Craniata</taxon>
        <taxon>Vertebrata</taxon>
        <taxon>Euteleostomi</taxon>
        <taxon>Mammalia</taxon>
        <taxon>Eutheria</taxon>
        <taxon>Euarchontoglires</taxon>
        <taxon>Primates</taxon>
        <taxon>Haplorrhini</taxon>
        <taxon>Catarrhini</taxon>
        <taxon>Hominidae</taxon>
        <taxon>Homo</taxon>
    </lineage>
</organism>
<dbReference type="EMBL" id="BX537697">
    <property type="status" value="NOT_ANNOTATED_CDS"/>
    <property type="molecule type" value="mRNA"/>
</dbReference>
<dbReference type="EMBL" id="AL035067">
    <property type="status" value="NOT_ANNOTATED_CDS"/>
    <property type="molecule type" value="Genomic_DNA"/>
</dbReference>
<dbReference type="CCDS" id="CCDS94655.1"/>
<dbReference type="RefSeq" id="NP_001341402.1">
    <property type="nucleotide sequence ID" value="NM_001354473.2"/>
</dbReference>
<dbReference type="SMR" id="A0A1B0GWG4"/>
<dbReference type="FunCoup" id="A0A1B0GWG4">
    <property type="interactions" value="42"/>
</dbReference>
<dbReference type="GlyCosmos" id="A0A1B0GWG4">
    <property type="glycosylation" value="1 site, No reported glycans"/>
</dbReference>
<dbReference type="GlyGen" id="A0A1B0GWG4">
    <property type="glycosylation" value="1 site"/>
</dbReference>
<dbReference type="BioMuta" id="SERTM2"/>
<dbReference type="PeptideAtlas" id="A0A1B0GWG4"/>
<dbReference type="Ensembl" id="ENST00000569275.2">
    <property type="protein sequence ID" value="ENSP00000490917.2"/>
    <property type="gene ID" value="ENSG00000260802.2"/>
</dbReference>
<dbReference type="GeneID" id="401613"/>
<dbReference type="MANE-Select" id="ENST00000569275.2">
    <property type="protein sequence ID" value="ENSP00000490917.2"/>
    <property type="RefSeq nucleotide sequence ID" value="NM_001354473.2"/>
    <property type="RefSeq protein sequence ID" value="NP_001341402.1"/>
</dbReference>
<dbReference type="AGR" id="HGNC:48576"/>
<dbReference type="GeneCards" id="SERTM2"/>
<dbReference type="HGNC" id="HGNC:48576">
    <property type="gene designation" value="SERTM2"/>
</dbReference>
<dbReference type="HPA" id="ENSG00000260802">
    <property type="expression patterns" value="Tissue enhanced (endometrium, epididymis, seminal vesicle)"/>
</dbReference>
<dbReference type="neXtProt" id="NX_A0A1B0GWG4"/>
<dbReference type="OpenTargets" id="ENSG00000260802"/>
<dbReference type="VEuPathDB" id="HostDB:ENSG00000260802"/>
<dbReference type="GeneTree" id="ENSGT00950000183232"/>
<dbReference type="InParanoid" id="A0A1B0GWG4"/>
<dbReference type="OrthoDB" id="9903474at2759"/>
<dbReference type="PAN-GO" id="A0A1B0GWG4">
    <property type="GO annotations" value="1 GO annotation based on evolutionary models"/>
</dbReference>
<dbReference type="Pharos" id="A0A1B0GWG4">
    <property type="development level" value="Tdark"/>
</dbReference>
<dbReference type="PRO" id="PR:A0A1B0GWG4"/>
<dbReference type="Proteomes" id="UP000005640">
    <property type="component" value="Chromosome X"/>
</dbReference>
<dbReference type="RNAct" id="A0A1B0GWG4">
    <property type="molecule type" value="protein"/>
</dbReference>
<dbReference type="Bgee" id="ENSG00000260802">
    <property type="expression patterns" value="Expressed in body of uterus and 53 other cell types or tissues"/>
</dbReference>
<dbReference type="GO" id="GO:0043231">
    <property type="term" value="C:intracellular membrane-bounded organelle"/>
    <property type="evidence" value="ECO:0000318"/>
    <property type="project" value="GO_Central"/>
</dbReference>
<dbReference type="GO" id="GO:0016020">
    <property type="term" value="C:membrane"/>
    <property type="evidence" value="ECO:0007669"/>
    <property type="project" value="UniProtKB-SubCell"/>
</dbReference>
<dbReference type="InterPro" id="IPR031741">
    <property type="entry name" value="SERTM"/>
</dbReference>
<dbReference type="PANTHER" id="PTHR35660:SF2">
    <property type="entry name" value="SERINE-RICH AND TRANSMEMBRANE DOMAIN-CONTAINING 2"/>
    <property type="match status" value="1"/>
</dbReference>
<dbReference type="PANTHER" id="PTHR35660">
    <property type="entry name" value="SERINE-RICH AND TRANSMEMBRANE DOMAIN-CONTAINING PROTEIN 1"/>
    <property type="match status" value="1"/>
</dbReference>
<dbReference type="Pfam" id="PF15872">
    <property type="entry name" value="SRTM1"/>
    <property type="match status" value="1"/>
</dbReference>
<reference key="1">
    <citation type="journal article" date="2001" name="Genome Res.">
        <title>Towards a catalog of human genes and proteins: sequencing and analysis of 500 novel complete protein coding human cDNAs.</title>
        <authorList>
            <person name="Wiemann S."/>
            <person name="Weil B."/>
            <person name="Wellenreuther R."/>
            <person name="Gassenhuber J."/>
            <person name="Glassl S."/>
            <person name="Ansorge W."/>
            <person name="Boecher M."/>
            <person name="Bloecker H."/>
            <person name="Bauersachs S."/>
            <person name="Blum H."/>
            <person name="Lauber J."/>
            <person name="Duesterhoeft A."/>
            <person name="Beyer A."/>
            <person name="Koehrer K."/>
            <person name="Strack N."/>
            <person name="Mewes H.-W."/>
            <person name="Ottenwaelder B."/>
            <person name="Obermaier B."/>
            <person name="Tampe J."/>
            <person name="Heubner D."/>
            <person name="Wambutt R."/>
            <person name="Korn B."/>
            <person name="Klein M."/>
            <person name="Poustka A."/>
        </authorList>
    </citation>
    <scope>NUCLEOTIDE SEQUENCE [LARGE SCALE MRNA]</scope>
</reference>
<reference key="2">
    <citation type="journal article" date="2005" name="Nature">
        <title>The DNA sequence of the human X chromosome.</title>
        <authorList>
            <person name="Ross M.T."/>
            <person name="Grafham D.V."/>
            <person name="Coffey A.J."/>
            <person name="Scherer S."/>
            <person name="McLay K."/>
            <person name="Muzny D."/>
            <person name="Platzer M."/>
            <person name="Howell G.R."/>
            <person name="Burrows C."/>
            <person name="Bird C.P."/>
            <person name="Frankish A."/>
            <person name="Lovell F.L."/>
            <person name="Howe K.L."/>
            <person name="Ashurst J.L."/>
            <person name="Fulton R.S."/>
            <person name="Sudbrak R."/>
            <person name="Wen G."/>
            <person name="Jones M.C."/>
            <person name="Hurles M.E."/>
            <person name="Andrews T.D."/>
            <person name="Scott C.E."/>
            <person name="Searle S."/>
            <person name="Ramser J."/>
            <person name="Whittaker A."/>
            <person name="Deadman R."/>
            <person name="Carter N.P."/>
            <person name="Hunt S.E."/>
            <person name="Chen R."/>
            <person name="Cree A."/>
            <person name="Gunaratne P."/>
            <person name="Havlak P."/>
            <person name="Hodgson A."/>
            <person name="Metzker M.L."/>
            <person name="Richards S."/>
            <person name="Scott G."/>
            <person name="Steffen D."/>
            <person name="Sodergren E."/>
            <person name="Wheeler D.A."/>
            <person name="Worley K.C."/>
            <person name="Ainscough R."/>
            <person name="Ambrose K.D."/>
            <person name="Ansari-Lari M.A."/>
            <person name="Aradhya S."/>
            <person name="Ashwell R.I."/>
            <person name="Babbage A.K."/>
            <person name="Bagguley C.L."/>
            <person name="Ballabio A."/>
            <person name="Banerjee R."/>
            <person name="Barker G.E."/>
            <person name="Barlow K.F."/>
            <person name="Barrett I.P."/>
            <person name="Bates K.N."/>
            <person name="Beare D.M."/>
            <person name="Beasley H."/>
            <person name="Beasley O."/>
            <person name="Beck A."/>
            <person name="Bethel G."/>
            <person name="Blechschmidt K."/>
            <person name="Brady N."/>
            <person name="Bray-Allen S."/>
            <person name="Bridgeman A.M."/>
            <person name="Brown A.J."/>
            <person name="Brown M.J."/>
            <person name="Bonnin D."/>
            <person name="Bruford E.A."/>
            <person name="Buhay C."/>
            <person name="Burch P."/>
            <person name="Burford D."/>
            <person name="Burgess J."/>
            <person name="Burrill W."/>
            <person name="Burton J."/>
            <person name="Bye J.M."/>
            <person name="Carder C."/>
            <person name="Carrel L."/>
            <person name="Chako J."/>
            <person name="Chapman J.C."/>
            <person name="Chavez D."/>
            <person name="Chen E."/>
            <person name="Chen G."/>
            <person name="Chen Y."/>
            <person name="Chen Z."/>
            <person name="Chinault C."/>
            <person name="Ciccodicola A."/>
            <person name="Clark S.Y."/>
            <person name="Clarke G."/>
            <person name="Clee C.M."/>
            <person name="Clegg S."/>
            <person name="Clerc-Blankenburg K."/>
            <person name="Clifford K."/>
            <person name="Cobley V."/>
            <person name="Cole C.G."/>
            <person name="Conquer J.S."/>
            <person name="Corby N."/>
            <person name="Connor R.E."/>
            <person name="David R."/>
            <person name="Davies J."/>
            <person name="Davis C."/>
            <person name="Davis J."/>
            <person name="Delgado O."/>
            <person name="Deshazo D."/>
            <person name="Dhami P."/>
            <person name="Ding Y."/>
            <person name="Dinh H."/>
            <person name="Dodsworth S."/>
            <person name="Draper H."/>
            <person name="Dugan-Rocha S."/>
            <person name="Dunham A."/>
            <person name="Dunn M."/>
            <person name="Durbin K.J."/>
            <person name="Dutta I."/>
            <person name="Eades T."/>
            <person name="Ellwood M."/>
            <person name="Emery-Cohen A."/>
            <person name="Errington H."/>
            <person name="Evans K.L."/>
            <person name="Faulkner L."/>
            <person name="Francis F."/>
            <person name="Frankland J."/>
            <person name="Fraser A.E."/>
            <person name="Galgoczy P."/>
            <person name="Gilbert J."/>
            <person name="Gill R."/>
            <person name="Gloeckner G."/>
            <person name="Gregory S.G."/>
            <person name="Gribble S."/>
            <person name="Griffiths C."/>
            <person name="Grocock R."/>
            <person name="Gu Y."/>
            <person name="Gwilliam R."/>
            <person name="Hamilton C."/>
            <person name="Hart E.A."/>
            <person name="Hawes A."/>
            <person name="Heath P.D."/>
            <person name="Heitmann K."/>
            <person name="Hennig S."/>
            <person name="Hernandez J."/>
            <person name="Hinzmann B."/>
            <person name="Ho S."/>
            <person name="Hoffs M."/>
            <person name="Howden P.J."/>
            <person name="Huckle E.J."/>
            <person name="Hume J."/>
            <person name="Hunt P.J."/>
            <person name="Hunt A.R."/>
            <person name="Isherwood J."/>
            <person name="Jacob L."/>
            <person name="Johnson D."/>
            <person name="Jones S."/>
            <person name="de Jong P.J."/>
            <person name="Joseph S.S."/>
            <person name="Keenan S."/>
            <person name="Kelly S."/>
            <person name="Kershaw J.K."/>
            <person name="Khan Z."/>
            <person name="Kioschis P."/>
            <person name="Klages S."/>
            <person name="Knights A.J."/>
            <person name="Kosiura A."/>
            <person name="Kovar-Smith C."/>
            <person name="Laird G.K."/>
            <person name="Langford C."/>
            <person name="Lawlor S."/>
            <person name="Leversha M."/>
            <person name="Lewis L."/>
            <person name="Liu W."/>
            <person name="Lloyd C."/>
            <person name="Lloyd D.M."/>
            <person name="Loulseged H."/>
            <person name="Loveland J.E."/>
            <person name="Lovell J.D."/>
            <person name="Lozado R."/>
            <person name="Lu J."/>
            <person name="Lyne R."/>
            <person name="Ma J."/>
            <person name="Maheshwari M."/>
            <person name="Matthews L.H."/>
            <person name="McDowall J."/>
            <person name="McLaren S."/>
            <person name="McMurray A."/>
            <person name="Meidl P."/>
            <person name="Meitinger T."/>
            <person name="Milne S."/>
            <person name="Miner G."/>
            <person name="Mistry S.L."/>
            <person name="Morgan M."/>
            <person name="Morris S."/>
            <person name="Mueller I."/>
            <person name="Mullikin J.C."/>
            <person name="Nguyen N."/>
            <person name="Nordsiek G."/>
            <person name="Nyakatura G."/>
            <person name="O'dell C.N."/>
            <person name="Okwuonu G."/>
            <person name="Palmer S."/>
            <person name="Pandian R."/>
            <person name="Parker D."/>
            <person name="Parrish J."/>
            <person name="Pasternak S."/>
            <person name="Patel D."/>
            <person name="Pearce A.V."/>
            <person name="Pearson D.M."/>
            <person name="Pelan S.E."/>
            <person name="Perez L."/>
            <person name="Porter K.M."/>
            <person name="Ramsey Y."/>
            <person name="Reichwald K."/>
            <person name="Rhodes S."/>
            <person name="Ridler K.A."/>
            <person name="Schlessinger D."/>
            <person name="Schueler M.G."/>
            <person name="Sehra H.K."/>
            <person name="Shaw-Smith C."/>
            <person name="Shen H."/>
            <person name="Sheridan E.M."/>
            <person name="Shownkeen R."/>
            <person name="Skuce C.D."/>
            <person name="Smith M.L."/>
            <person name="Sotheran E.C."/>
            <person name="Steingruber H.E."/>
            <person name="Steward C.A."/>
            <person name="Storey R."/>
            <person name="Swann R.M."/>
            <person name="Swarbreck D."/>
            <person name="Tabor P.E."/>
            <person name="Taudien S."/>
            <person name="Taylor T."/>
            <person name="Teague B."/>
            <person name="Thomas K."/>
            <person name="Thorpe A."/>
            <person name="Timms K."/>
            <person name="Tracey A."/>
            <person name="Trevanion S."/>
            <person name="Tromans A.C."/>
            <person name="d'Urso M."/>
            <person name="Verduzco D."/>
            <person name="Villasana D."/>
            <person name="Waldron L."/>
            <person name="Wall M."/>
            <person name="Wang Q."/>
            <person name="Warren J."/>
            <person name="Warry G.L."/>
            <person name="Wei X."/>
            <person name="West A."/>
            <person name="Whitehead S.L."/>
            <person name="Whiteley M.N."/>
            <person name="Wilkinson J.E."/>
            <person name="Willey D.L."/>
            <person name="Williams G."/>
            <person name="Williams L."/>
            <person name="Williamson A."/>
            <person name="Williamson H."/>
            <person name="Wilming L."/>
            <person name="Woodmansey R.L."/>
            <person name="Wray P.W."/>
            <person name="Yen J."/>
            <person name="Zhang J."/>
            <person name="Zhou J."/>
            <person name="Zoghbi H."/>
            <person name="Zorilla S."/>
            <person name="Buck D."/>
            <person name="Reinhardt R."/>
            <person name="Poustka A."/>
            <person name="Rosenthal A."/>
            <person name="Lehrach H."/>
            <person name="Meindl A."/>
            <person name="Minx P.J."/>
            <person name="Hillier L.W."/>
            <person name="Willard H.F."/>
            <person name="Wilson R.K."/>
            <person name="Waterston R.H."/>
            <person name="Rice C.M."/>
            <person name="Vaudin M."/>
            <person name="Coulson A."/>
            <person name="Nelson D.L."/>
            <person name="Weinstock G."/>
            <person name="Sulston J.E."/>
            <person name="Durbin R.M."/>
            <person name="Hubbard T."/>
            <person name="Gibbs R.A."/>
            <person name="Beck S."/>
            <person name="Rogers J."/>
            <person name="Bentley D.R."/>
        </authorList>
    </citation>
    <scope>NUCLEOTIDE SEQUENCE [LARGE SCALE GENOMIC DNA]</scope>
</reference>